<evidence type="ECO:0000250" key="1">
    <source>
        <dbReference type="UniProtKB" id="P36873"/>
    </source>
</evidence>
<evidence type="ECO:0000250" key="2">
    <source>
        <dbReference type="UniProtKB" id="P62136"/>
    </source>
</evidence>
<evidence type="ECO:0000256" key="3">
    <source>
        <dbReference type="SAM" id="MobiDB-lite"/>
    </source>
</evidence>
<evidence type="ECO:0000269" key="4">
    <source>
    </source>
</evidence>
<evidence type="ECO:0000269" key="5">
    <source>
    </source>
</evidence>
<evidence type="ECO:0000269" key="6">
    <source>
    </source>
</evidence>
<evidence type="ECO:0000269" key="7">
    <source>
    </source>
</evidence>
<evidence type="ECO:0000269" key="8">
    <source>
    </source>
</evidence>
<evidence type="ECO:0000269" key="9">
    <source>
    </source>
</evidence>
<evidence type="ECO:0000269" key="10">
    <source>
    </source>
</evidence>
<evidence type="ECO:0000305" key="11"/>
<evidence type="ECO:0000312" key="12">
    <source>
        <dbReference type="WormBase" id="F29F11.6"/>
    </source>
</evidence>
<keyword id="KW-0131">Cell cycle</keyword>
<keyword id="KW-0132">Cell division</keyword>
<keyword id="KW-0156">Chromatin regulator</keyword>
<keyword id="KW-0378">Hydrolase</keyword>
<keyword id="KW-0464">Manganese</keyword>
<keyword id="KW-0469">Meiosis</keyword>
<keyword id="KW-0479">Metal-binding</keyword>
<keyword id="KW-0498">Mitosis</keyword>
<keyword id="KW-0904">Protein phosphatase</keyword>
<keyword id="KW-1185">Reference proteome</keyword>
<protein>
    <recommendedName>
        <fullName>Serine/threonine-protein phosphatase PP1-alpha</fullName>
        <ecNumber>3.1.3.16</ecNumber>
    </recommendedName>
    <alternativeName>
        <fullName>CeGLC-7-alpha</fullName>
    </alternativeName>
    <alternativeName>
        <fullName>Glc seven-like phosphatase 1</fullName>
    </alternativeName>
</protein>
<dbReference type="EC" id="3.1.3.16"/>
<dbReference type="EMBL" id="BX284605">
    <property type="protein sequence ID" value="CAA98273.1"/>
    <property type="molecule type" value="Genomic_DNA"/>
</dbReference>
<dbReference type="PIR" id="T21553">
    <property type="entry name" value="T21553"/>
</dbReference>
<dbReference type="RefSeq" id="NP_001256249.1">
    <property type="nucleotide sequence ID" value="NM_001269320.1"/>
</dbReference>
<dbReference type="RefSeq" id="NP_001256250.1">
    <property type="nucleotide sequence ID" value="NM_001269321.4"/>
</dbReference>
<dbReference type="SMR" id="Q27497"/>
<dbReference type="BioGRID" id="44515">
    <property type="interactions" value="13"/>
</dbReference>
<dbReference type="DIP" id="DIP-55373N"/>
<dbReference type="FunCoup" id="Q27497">
    <property type="interactions" value="2821"/>
</dbReference>
<dbReference type="IntAct" id="Q27497">
    <property type="interactions" value="4"/>
</dbReference>
<dbReference type="STRING" id="6239.F29F11.6.1"/>
<dbReference type="iPTMnet" id="Q27497"/>
<dbReference type="PaxDb" id="6239-F29F11.6a"/>
<dbReference type="EnsemblMetazoa" id="F29F11.6.1">
    <property type="protein sequence ID" value="F29F11.6.1"/>
    <property type="gene ID" value="WBGene00001747"/>
</dbReference>
<dbReference type="GeneID" id="179486"/>
<dbReference type="KEGG" id="cel:CELE_F29F11.6"/>
<dbReference type="UCSC" id="F29F11.6">
    <property type="organism name" value="c. elegans"/>
</dbReference>
<dbReference type="AGR" id="WB:WBGene00001747"/>
<dbReference type="CTD" id="179486"/>
<dbReference type="WormBase" id="F29F11.6">
    <property type="protein sequence ID" value="CE20735"/>
    <property type="gene ID" value="WBGene00001747"/>
    <property type="gene designation" value="gsp-1"/>
</dbReference>
<dbReference type="eggNOG" id="KOG0374">
    <property type="taxonomic scope" value="Eukaryota"/>
</dbReference>
<dbReference type="GeneTree" id="ENSGT00940000154644"/>
<dbReference type="HOGENOM" id="CLU_004962_0_0_1"/>
<dbReference type="InParanoid" id="Q27497"/>
<dbReference type="OMA" id="TVQMSEN"/>
<dbReference type="OrthoDB" id="1930084at2759"/>
<dbReference type="PhylomeDB" id="Q27497"/>
<dbReference type="Reactome" id="R-CEL-2565942">
    <property type="pathway name" value="Regulation of PLK1 Activity at G2/M Transition"/>
</dbReference>
<dbReference type="Reactome" id="R-CEL-5625740">
    <property type="pathway name" value="RHO GTPases activate PKNs"/>
</dbReference>
<dbReference type="Reactome" id="R-CEL-5627123">
    <property type="pathway name" value="RHO GTPases activate PAKs"/>
</dbReference>
<dbReference type="Reactome" id="R-CEL-5673000">
    <property type="pathway name" value="RAF activation"/>
</dbReference>
<dbReference type="PRO" id="PR:Q27497"/>
<dbReference type="Proteomes" id="UP000001940">
    <property type="component" value="Chromosome V"/>
</dbReference>
<dbReference type="GO" id="GO:0005737">
    <property type="term" value="C:cytoplasm"/>
    <property type="evidence" value="ECO:0000318"/>
    <property type="project" value="GO_Central"/>
</dbReference>
<dbReference type="GO" id="GO:0005634">
    <property type="term" value="C:nucleus"/>
    <property type="evidence" value="ECO:0000318"/>
    <property type="project" value="GO_Central"/>
</dbReference>
<dbReference type="GO" id="GO:0046872">
    <property type="term" value="F:metal ion binding"/>
    <property type="evidence" value="ECO:0007669"/>
    <property type="project" value="UniProtKB-KW"/>
</dbReference>
<dbReference type="GO" id="GO:0004722">
    <property type="term" value="F:protein serine/threonine phosphatase activity"/>
    <property type="evidence" value="ECO:0000318"/>
    <property type="project" value="GO_Central"/>
</dbReference>
<dbReference type="GO" id="GO:0051301">
    <property type="term" value="P:cell division"/>
    <property type="evidence" value="ECO:0007669"/>
    <property type="project" value="UniProtKB-KW"/>
</dbReference>
<dbReference type="GO" id="GO:0006325">
    <property type="term" value="P:chromatin organization"/>
    <property type="evidence" value="ECO:0007669"/>
    <property type="project" value="UniProtKB-KW"/>
</dbReference>
<dbReference type="GO" id="GO:0051321">
    <property type="term" value="P:meiotic cell cycle"/>
    <property type="evidence" value="ECO:0007669"/>
    <property type="project" value="UniProtKB-KW"/>
</dbReference>
<dbReference type="GO" id="GO:0001933">
    <property type="term" value="P:negative regulation of protein phosphorylation"/>
    <property type="evidence" value="ECO:0000315"/>
    <property type="project" value="UniProtKB"/>
</dbReference>
<dbReference type="GO" id="GO:0010628">
    <property type="term" value="P:positive regulation of gene expression"/>
    <property type="evidence" value="ECO:0000316"/>
    <property type="project" value="UniProtKB"/>
</dbReference>
<dbReference type="CDD" id="cd07414">
    <property type="entry name" value="MPP_PP1_PPKL"/>
    <property type="match status" value="1"/>
</dbReference>
<dbReference type="FunFam" id="3.60.21.10:FF:000007">
    <property type="entry name" value="Serine/threonine-protein phosphatase"/>
    <property type="match status" value="1"/>
</dbReference>
<dbReference type="Gene3D" id="3.60.21.10">
    <property type="match status" value="1"/>
</dbReference>
<dbReference type="InterPro" id="IPR004843">
    <property type="entry name" value="Calcineurin-like_PHP_ApaH"/>
</dbReference>
<dbReference type="InterPro" id="IPR029052">
    <property type="entry name" value="Metallo-depent_PP-like"/>
</dbReference>
<dbReference type="InterPro" id="IPR050341">
    <property type="entry name" value="PP1_catalytic_subunit"/>
</dbReference>
<dbReference type="InterPro" id="IPR006186">
    <property type="entry name" value="Ser/Thr-sp_prot-phosphatase"/>
</dbReference>
<dbReference type="InterPro" id="IPR031675">
    <property type="entry name" value="STPPase_N"/>
</dbReference>
<dbReference type="PANTHER" id="PTHR11668">
    <property type="entry name" value="SERINE/THREONINE PROTEIN PHOSPHATASE"/>
    <property type="match status" value="1"/>
</dbReference>
<dbReference type="PANTHER" id="PTHR11668:SF510">
    <property type="entry name" value="SERINE_THREONINE-PROTEIN PHOSPHATASE"/>
    <property type="match status" value="1"/>
</dbReference>
<dbReference type="Pfam" id="PF00149">
    <property type="entry name" value="Metallophos"/>
    <property type="match status" value="1"/>
</dbReference>
<dbReference type="Pfam" id="PF16891">
    <property type="entry name" value="STPPase_N"/>
    <property type="match status" value="1"/>
</dbReference>
<dbReference type="PRINTS" id="PR00114">
    <property type="entry name" value="STPHPHTASE"/>
</dbReference>
<dbReference type="SMART" id="SM00156">
    <property type="entry name" value="PP2Ac"/>
    <property type="match status" value="1"/>
</dbReference>
<dbReference type="SUPFAM" id="SSF56300">
    <property type="entry name" value="Metallo-dependent phosphatases"/>
    <property type="match status" value="1"/>
</dbReference>
<dbReference type="PROSITE" id="PS00125">
    <property type="entry name" value="SER_THR_PHOSPHATASE"/>
    <property type="match status" value="1"/>
</dbReference>
<comment type="function">
    <text evidence="4 5 6 7 9">Serine/threonine-protein phosphatase which antagonizes the function of air-2 in the regulation of chromosome cohesion (PubMed:11940606, PubMed:14622138). Dephosphorylates histone H3 at 'Ser-10' (PubMed:10975519). Dephosphorylates translation initiation factor eIF2alpha (PubMed:22719267). Involved in the activation of chloride channel clh-3 during cell swelling and meiotic maturation (PubMed:12163466).</text>
</comment>
<comment type="catalytic activity">
    <reaction evidence="2">
        <text>O-phospho-L-seryl-[protein] + H2O = L-seryl-[protein] + phosphate</text>
        <dbReference type="Rhea" id="RHEA:20629"/>
        <dbReference type="Rhea" id="RHEA-COMP:9863"/>
        <dbReference type="Rhea" id="RHEA-COMP:11604"/>
        <dbReference type="ChEBI" id="CHEBI:15377"/>
        <dbReference type="ChEBI" id="CHEBI:29999"/>
        <dbReference type="ChEBI" id="CHEBI:43474"/>
        <dbReference type="ChEBI" id="CHEBI:83421"/>
        <dbReference type="EC" id="3.1.3.16"/>
    </reaction>
</comment>
<comment type="catalytic activity">
    <reaction evidence="2">
        <text>O-phospho-L-threonyl-[protein] + H2O = L-threonyl-[protein] + phosphate</text>
        <dbReference type="Rhea" id="RHEA:47004"/>
        <dbReference type="Rhea" id="RHEA-COMP:11060"/>
        <dbReference type="Rhea" id="RHEA-COMP:11605"/>
        <dbReference type="ChEBI" id="CHEBI:15377"/>
        <dbReference type="ChEBI" id="CHEBI:30013"/>
        <dbReference type="ChEBI" id="CHEBI:43474"/>
        <dbReference type="ChEBI" id="CHEBI:61977"/>
        <dbReference type="EC" id="3.1.3.16"/>
    </reaction>
</comment>
<comment type="cofactor">
    <cofactor evidence="2">
        <name>Mn(2+)</name>
        <dbReference type="ChEBI" id="CHEBI:29035"/>
    </cofactor>
    <text evidence="2">Binds 2 manganese ions per subunit.</text>
</comment>
<comment type="subunit">
    <text evidence="8 10">Interacts with lab-1; the interaction is direct (PubMed:22927794). Interacts with knl-1; the interaction is direct (PubMed:22331849).</text>
</comment>
<comment type="interaction">
    <interactant intactId="EBI-2416859">
        <id>Q27497</id>
    </interactant>
    <interactant intactId="EBI-16011794">
        <id>Q17604</id>
        <label>lab-1</label>
    </interactant>
    <organismsDiffer>false</organismsDiffer>
    <experiments>3</experiments>
</comment>
<comment type="similarity">
    <text evidence="11">Belongs to the PPP phosphatase family. PP-1 subfamily.</text>
</comment>
<name>GLC7A_CAEEL</name>
<accession>Q27497</accession>
<gene>
    <name evidence="12" type="primary">gsp-1</name>
    <name evidence="12" type="ORF">F29F11.6</name>
</gene>
<feature type="chain" id="PRO_0000268637" description="Serine/threonine-protein phosphatase PP1-alpha">
    <location>
        <begin position="1"/>
        <end position="329"/>
    </location>
</feature>
<feature type="region of interest" description="Disordered" evidence="3">
    <location>
        <begin position="309"/>
        <end position="329"/>
    </location>
</feature>
<feature type="active site" description="Proton donor" evidence="1">
    <location>
        <position position="125"/>
    </location>
</feature>
<feature type="binding site" evidence="2">
    <location>
        <position position="64"/>
    </location>
    <ligand>
        <name>Mn(2+)</name>
        <dbReference type="ChEBI" id="CHEBI:29035"/>
        <label>1</label>
    </ligand>
</feature>
<feature type="binding site" evidence="2">
    <location>
        <position position="64"/>
    </location>
    <ligand>
        <name>Mn(2+)</name>
        <dbReference type="ChEBI" id="CHEBI:29035"/>
        <label>2</label>
    </ligand>
</feature>
<feature type="binding site" evidence="2">
    <location>
        <position position="66"/>
    </location>
    <ligand>
        <name>Mn(2+)</name>
        <dbReference type="ChEBI" id="CHEBI:29035"/>
        <label>1</label>
    </ligand>
</feature>
<feature type="binding site" evidence="2">
    <location>
        <position position="92"/>
    </location>
    <ligand>
        <name>Mn(2+)</name>
        <dbReference type="ChEBI" id="CHEBI:29035"/>
        <label>1</label>
    </ligand>
</feature>
<feature type="binding site" evidence="2">
    <location>
        <position position="92"/>
    </location>
    <ligand>
        <name>Mn(2+)</name>
        <dbReference type="ChEBI" id="CHEBI:29035"/>
        <label>2</label>
    </ligand>
</feature>
<feature type="binding site" evidence="2">
    <location>
        <position position="124"/>
    </location>
    <ligand>
        <name>Mn(2+)</name>
        <dbReference type="ChEBI" id="CHEBI:29035"/>
        <label>2</label>
    </ligand>
</feature>
<feature type="binding site" evidence="2">
    <location>
        <position position="173"/>
    </location>
    <ligand>
        <name>Mn(2+)</name>
        <dbReference type="ChEBI" id="CHEBI:29035"/>
        <label>2</label>
    </ligand>
</feature>
<feature type="binding site" evidence="2">
    <location>
        <position position="248"/>
    </location>
    <ligand>
        <name>Mn(2+)</name>
        <dbReference type="ChEBI" id="CHEBI:29035"/>
        <label>2</label>
    </ligand>
</feature>
<sequence length="329" mass="37205">MSNDGDLNIDNLITRLLEVRGCRPGKPVTMSEAEIRALCHKSREIFLSQPILLELEAPLKICGDIHGQYNDLLRLFEYGGFPPEANYLFLGDYVDRGKQSLETICLLLAYKVKYPENFFLLRGNHECASINRIYGFYDECKRRFSIKLWKTFTDCFNCLPIAALIDEKIFCCHGGLSPDLQNMEQIRRVMRPTDVPDTGLLCDLLWSDPDKDVTGWGENDRGVSFTFGPDVVAKFLNRHDLDLICRAHQVVEDGYEFFAKRQLVTLFSAPNYCGEFDNAGGMMSVDETLMCSFQILKPSEKKAKYQYQGMNSGRPAVGGGRPGTTAGKK</sequence>
<proteinExistence type="evidence at protein level"/>
<reference key="1">
    <citation type="journal article" date="1998" name="Science">
        <title>Genome sequence of the nematode C. elegans: a platform for investigating biology.</title>
        <authorList>
            <consortium name="The C. elegans sequencing consortium"/>
        </authorList>
    </citation>
    <scope>NUCLEOTIDE SEQUENCE [LARGE SCALE GENOMIC DNA]</scope>
    <source>
        <strain>Bristol N2</strain>
    </source>
</reference>
<reference key="2">
    <citation type="journal article" date="2000" name="Cell">
        <title>Mitotic phosphorylation of histone H3 is governed by Ipl1/aurora kinase and Glc7/PP1 phosphatase in budding yeast and nematodes.</title>
        <authorList>
            <person name="Hsu J.-Y."/>
            <person name="Sun Z.-W."/>
            <person name="Li X."/>
            <person name="Reuben M."/>
            <person name="Tatchell K."/>
            <person name="Bishop D.K."/>
            <person name="Grushcow J.M."/>
            <person name="Brame C.J."/>
            <person name="Caldwell J.A."/>
            <person name="Hunt D.F."/>
            <person name="Lin R."/>
            <person name="Smith M.M."/>
            <person name="Allis C.D."/>
        </authorList>
    </citation>
    <scope>FUNCTION</scope>
</reference>
<reference key="3">
    <citation type="journal article" date="2002" name="J. Cell Biol.">
        <title>The aurora kinase AIR-2 functions in the release of chromosome cohesion in Caenorhabditis elegans meiosis.</title>
        <authorList>
            <person name="Rogers E."/>
            <person name="Bishop J.D."/>
            <person name="Waddle J.A."/>
            <person name="Schumacher J.M."/>
            <person name="Lin R."/>
        </authorList>
    </citation>
    <scope>FUNCTION</scope>
</reference>
<reference key="4">
    <citation type="journal article" date="2002" name="J. Cell Biol.">
        <title>Cell cycle- and swelling-induced activation of a Caenorhabditis elegans ClC channel is mediated by CeGLC-7alpha/beta phosphatases.</title>
        <authorList>
            <person name="Rutledge E."/>
            <person name="Denton J."/>
            <person name="Strange K."/>
        </authorList>
    </citation>
    <scope>FUNCTION</scope>
</reference>
<reference key="5">
    <citation type="journal article" date="2003" name="Genes Cells">
        <title>Caenorhabditis elegans RBX1 is essential for meiosis, mitotic chromosomal condensation and segregation, and cytokinesis.</title>
        <authorList>
            <person name="Sasagawa Y."/>
            <person name="Urano T."/>
            <person name="Kohara Y."/>
            <person name="Takahashi H."/>
            <person name="Higashitani A."/>
        </authorList>
    </citation>
    <scope>FUNCTION</scope>
</reference>
<reference key="6">
    <citation type="journal article" date="2012" name="PLoS Biol.">
        <title>LAB-1 targets PP1 and restricts Aurora B kinase upon entrance into meiosis to promote sister chromatid cohesion.</title>
        <authorList>
            <person name="Tzur Y.B."/>
            <person name="Egydio de Carvalho C."/>
            <person name="Nadarajan S."/>
            <person name="Van Bostelen I."/>
            <person name="Gu Y."/>
            <person name="Chu D.S."/>
            <person name="Cheeseman I.M."/>
            <person name="Colaiacovo M.P."/>
        </authorList>
    </citation>
    <scope>INTERACTION WITH LAB-1</scope>
</reference>
<reference key="7">
    <citation type="journal article" date="2012" name="PLoS Genet.">
        <title>Protective coupling of mitochondrial function and protein synthesis via the eIF2alpha kinase GCN-2.</title>
        <authorList>
            <person name="Baker B.M."/>
            <person name="Nargund A.M."/>
            <person name="Sun T."/>
            <person name="Haynes C.M."/>
        </authorList>
    </citation>
    <scope>FUNCTION</scope>
</reference>
<reference key="8">
    <citation type="journal article" date="2012" name="J. Cell Biol.">
        <title>Microtubule binding by KNL-1 contributes to spindle checkpoint silencing at the kinetochore.</title>
        <authorList>
            <person name="Espeut J."/>
            <person name="Cheerambathur D.K."/>
            <person name="Krenning L."/>
            <person name="Oegema K."/>
            <person name="Desai A."/>
        </authorList>
    </citation>
    <scope>INTERACTION WITH KNL-1</scope>
</reference>
<organism>
    <name type="scientific">Caenorhabditis elegans</name>
    <dbReference type="NCBI Taxonomy" id="6239"/>
    <lineage>
        <taxon>Eukaryota</taxon>
        <taxon>Metazoa</taxon>
        <taxon>Ecdysozoa</taxon>
        <taxon>Nematoda</taxon>
        <taxon>Chromadorea</taxon>
        <taxon>Rhabditida</taxon>
        <taxon>Rhabditina</taxon>
        <taxon>Rhabditomorpha</taxon>
        <taxon>Rhabditoidea</taxon>
        <taxon>Rhabditidae</taxon>
        <taxon>Peloderinae</taxon>
        <taxon>Caenorhabditis</taxon>
    </lineage>
</organism>